<evidence type="ECO:0000255" key="1">
    <source>
        <dbReference type="PROSITE-ProRule" id="PRU00251"/>
    </source>
</evidence>
<evidence type="ECO:0000256" key="2">
    <source>
        <dbReference type="SAM" id="MobiDB-lite"/>
    </source>
</evidence>
<evidence type="ECO:0000269" key="3">
    <source>
    </source>
</evidence>
<evidence type="ECO:0000269" key="4">
    <source>
    </source>
</evidence>
<evidence type="ECO:0000269" key="5">
    <source>
    </source>
</evidence>
<evidence type="ECO:0000269" key="6">
    <source>
    </source>
</evidence>
<evidence type="ECO:0000269" key="7">
    <source>
    </source>
</evidence>
<evidence type="ECO:0000269" key="8">
    <source>
    </source>
</evidence>
<evidence type="ECO:0000269" key="9">
    <source>
    </source>
</evidence>
<evidence type="ECO:0000269" key="10">
    <source>
    </source>
</evidence>
<evidence type="ECO:0000303" key="11">
    <source>
    </source>
</evidence>
<evidence type="ECO:0000305" key="12"/>
<proteinExistence type="evidence at protein level"/>
<organism>
    <name type="scientific">Aspergillus fumigatus (strain ATCC MYA-4609 / CBS 101355 / FGSC A1100 / Af293)</name>
    <name type="common">Neosartorya fumigata</name>
    <dbReference type="NCBI Taxonomy" id="330879"/>
    <lineage>
        <taxon>Eukaryota</taxon>
        <taxon>Fungi</taxon>
        <taxon>Dikarya</taxon>
        <taxon>Ascomycota</taxon>
        <taxon>Pezizomycotina</taxon>
        <taxon>Eurotiomycetes</taxon>
        <taxon>Eurotiomycetidae</taxon>
        <taxon>Eurotiales</taxon>
        <taxon>Aspergillaceae</taxon>
        <taxon>Aspergillus</taxon>
        <taxon>Aspergillus subgen. Fumigati</taxon>
    </lineage>
</organism>
<comment type="function">
    <text evidence="3 4 5 6 7 8 9 10">Transcription factor; part of cell wall integrity (CWI) signaling pathway composed of pkcA, the bck1-mkk2-mpka MAPK cascade and the downstream rlmA transcription regulator (PubMed:16372009). The CWI signaling pathway regulates cell wall integrity and pyomelanin formation (PubMed:19715768). CWI also controls oxidative stress response, gliotoxin production, iron adaptation and asexual development (PubMed:21883519, PubMed:32005734). Finally, CWI is constitutively required for A.fumigatus to cope with the temperature increase found in the mammalian lung environment, during infection (PubMed:33010083). Positively regulates the phosphorylation of mpkA (PubMed:27473315). Involved in tolerance to oxidative damage and transcriptional regulation of genes related to oxidative stress adaptation (PubMed:27473315). Directly regulates the expression of regulators of conidiation, including flbB, flbC, brlA, abaA, and rasB, as well as genes involved in cell wall synthesis and remodeling (PubMed:32005734). Specifically associates with the target fumiquinazoline (fmq) cluster genes promoters at conserved motifs (5'-TAWWWWTA-3') during conidiation to supplement mature conidia with fumiquinazoline C (PubMed:33705521). Also controls the DHN-melanin production via binding the promoter of pksP (PubMed:27393422).</text>
</comment>
<comment type="subunit">
    <text evidence="9">Interacts with hsp90.</text>
</comment>
<comment type="subcellular location">
    <subcellularLocation>
        <location evidence="1">Nucleus</location>
    </subcellularLocation>
</comment>
<comment type="induction">
    <text evidence="7 8">Expression is induced during cell wall stress (PubMed:27473315). Also induced during asexual development (PubMed:32005734).</text>
</comment>
<comment type="PTM">
    <text evidence="8">Phosphorylation during asexual development.</text>
</comment>
<comment type="disruption phenotype">
    <text evidence="6 7 8 10">Exhibits an altered cell wall organization in addition to defects related to vegetative growth and tolerance to cell wall-perturbing agents (PubMed:27473315). Results in attenuated virulence in a neutropenic murine model of invasive pulmonary aspergillosis (PubMed:27473315). Leads to reduced conidiation during asexual differentiation (PubMed:32005734). Reduces conidial pigment DHN-melanin formation (PubMed:27393422). Strongly decreases the production of fumiquinazoline C (PubMed:33705521).</text>
</comment>
<comment type="similarity">
    <text evidence="12">Belongs to the MEF2 family.</text>
</comment>
<feature type="chain" id="PRO_0000453188" description="Transcription factor rlmA">
    <location>
        <begin position="1"/>
        <end position="600"/>
    </location>
</feature>
<feature type="domain" description="MADS-box" evidence="1">
    <location>
        <begin position="1"/>
        <end position="61"/>
    </location>
</feature>
<feature type="region of interest" description="Disordered" evidence="2">
    <location>
        <begin position="71"/>
        <end position="518"/>
    </location>
</feature>
<feature type="region of interest" description="Disordered" evidence="2">
    <location>
        <begin position="544"/>
        <end position="600"/>
    </location>
</feature>
<feature type="compositionally biased region" description="Basic and acidic residues" evidence="2">
    <location>
        <begin position="75"/>
        <end position="89"/>
    </location>
</feature>
<feature type="compositionally biased region" description="Polar residues" evidence="2">
    <location>
        <begin position="151"/>
        <end position="160"/>
    </location>
</feature>
<feature type="compositionally biased region" description="Pro residues" evidence="2">
    <location>
        <begin position="222"/>
        <end position="242"/>
    </location>
</feature>
<feature type="compositionally biased region" description="Low complexity" evidence="2">
    <location>
        <begin position="243"/>
        <end position="260"/>
    </location>
</feature>
<feature type="compositionally biased region" description="Polar residues" evidence="2">
    <location>
        <begin position="328"/>
        <end position="339"/>
    </location>
</feature>
<feature type="compositionally biased region" description="Basic and acidic residues" evidence="2">
    <location>
        <begin position="364"/>
        <end position="384"/>
    </location>
</feature>
<feature type="compositionally biased region" description="Pro residues" evidence="2">
    <location>
        <begin position="386"/>
        <end position="397"/>
    </location>
</feature>
<feature type="compositionally biased region" description="Low complexity" evidence="2">
    <location>
        <begin position="440"/>
        <end position="452"/>
    </location>
</feature>
<feature type="compositionally biased region" description="Polar residues" evidence="2">
    <location>
        <begin position="453"/>
        <end position="468"/>
    </location>
</feature>
<feature type="compositionally biased region" description="Pro residues" evidence="2">
    <location>
        <begin position="490"/>
        <end position="501"/>
    </location>
</feature>
<feature type="compositionally biased region" description="Low complexity" evidence="2">
    <location>
        <begin position="503"/>
        <end position="515"/>
    </location>
</feature>
<reference key="1">
    <citation type="journal article" date="2005" name="Nature">
        <title>Genomic sequence of the pathogenic and allergenic filamentous fungus Aspergillus fumigatus.</title>
        <authorList>
            <person name="Nierman W.C."/>
            <person name="Pain A."/>
            <person name="Anderson M.J."/>
            <person name="Wortman J.R."/>
            <person name="Kim H.S."/>
            <person name="Arroyo J."/>
            <person name="Berriman M."/>
            <person name="Abe K."/>
            <person name="Archer D.B."/>
            <person name="Bermejo C."/>
            <person name="Bennett J.W."/>
            <person name="Bowyer P."/>
            <person name="Chen D."/>
            <person name="Collins M."/>
            <person name="Coulsen R."/>
            <person name="Davies R."/>
            <person name="Dyer P.S."/>
            <person name="Farman M.L."/>
            <person name="Fedorova N."/>
            <person name="Fedorova N.D."/>
            <person name="Feldblyum T.V."/>
            <person name="Fischer R."/>
            <person name="Fosker N."/>
            <person name="Fraser A."/>
            <person name="Garcia J.L."/>
            <person name="Garcia M.J."/>
            <person name="Goble A."/>
            <person name="Goldman G.H."/>
            <person name="Gomi K."/>
            <person name="Griffith-Jones S."/>
            <person name="Gwilliam R."/>
            <person name="Haas B.J."/>
            <person name="Haas H."/>
            <person name="Harris D.E."/>
            <person name="Horiuchi H."/>
            <person name="Huang J."/>
            <person name="Humphray S."/>
            <person name="Jimenez J."/>
            <person name="Keller N."/>
            <person name="Khouri H."/>
            <person name="Kitamoto K."/>
            <person name="Kobayashi T."/>
            <person name="Konzack S."/>
            <person name="Kulkarni R."/>
            <person name="Kumagai T."/>
            <person name="Lafton A."/>
            <person name="Latge J.-P."/>
            <person name="Li W."/>
            <person name="Lord A."/>
            <person name="Lu C."/>
            <person name="Majoros W.H."/>
            <person name="May G.S."/>
            <person name="Miller B.L."/>
            <person name="Mohamoud Y."/>
            <person name="Molina M."/>
            <person name="Monod M."/>
            <person name="Mouyna I."/>
            <person name="Mulligan S."/>
            <person name="Murphy L.D."/>
            <person name="O'Neil S."/>
            <person name="Paulsen I."/>
            <person name="Penalva M.A."/>
            <person name="Pertea M."/>
            <person name="Price C."/>
            <person name="Pritchard B.L."/>
            <person name="Quail M.A."/>
            <person name="Rabbinowitsch E."/>
            <person name="Rawlins N."/>
            <person name="Rajandream M.A."/>
            <person name="Reichard U."/>
            <person name="Renauld H."/>
            <person name="Robson G.D."/>
            <person name="Rodriguez de Cordoba S."/>
            <person name="Rodriguez-Pena J.M."/>
            <person name="Ronning C.M."/>
            <person name="Rutter S."/>
            <person name="Salzberg S.L."/>
            <person name="Sanchez M."/>
            <person name="Sanchez-Ferrero J.C."/>
            <person name="Saunders D."/>
            <person name="Seeger K."/>
            <person name="Squares R."/>
            <person name="Squares S."/>
            <person name="Takeuchi M."/>
            <person name="Tekaia F."/>
            <person name="Turner G."/>
            <person name="Vazquez de Aldana C.R."/>
            <person name="Weidman J."/>
            <person name="White O."/>
            <person name="Woodward J.R."/>
            <person name="Yu J.-H."/>
            <person name="Fraser C.M."/>
            <person name="Galagan J.E."/>
            <person name="Asai K."/>
            <person name="Machida M."/>
            <person name="Hall N."/>
            <person name="Barrell B.G."/>
            <person name="Denning D.W."/>
        </authorList>
    </citation>
    <scope>NUCLEOTIDE SEQUENCE [LARGE SCALE GENOMIC DNA]</scope>
    <source>
        <strain>ATCC MYA-4609 / CBS 101355 / FGSC A1100 / Af293</strain>
    </source>
</reference>
<reference key="2">
    <citation type="journal article" date="2009" name="Fungal Genet. Biol.">
        <title>The MpkA MAP kinase module regulates cell wall integrity signaling and pyomelanin formation in Aspergillus fumigatus.</title>
        <authorList>
            <person name="Valiante V."/>
            <person name="Jain R."/>
            <person name="Heinekamp T."/>
            <person name="Brakhage A.A."/>
        </authorList>
    </citation>
    <scope>FUNCTION</scope>
</reference>
<reference key="3">
    <citation type="journal article" date="2011" name="Mol. Microbiol.">
        <title>The MAP kinase MpkA controls cell wall integrity, oxidative stress response, gliotoxin production and iron adaptation in Aspergillus fumigatus.</title>
        <authorList>
            <person name="Jain R."/>
            <person name="Valiante V."/>
            <person name="Remme N."/>
            <person name="Docimo T."/>
            <person name="Heinekamp T."/>
            <person name="Hertweck C."/>
            <person name="Gershenzon J."/>
            <person name="Haas H."/>
            <person name="Brakhage A.A."/>
        </authorList>
    </citation>
    <scope>FUNCTION</scope>
</reference>
<reference key="4">
    <citation type="journal article" date="2016" name="G3 (Bethesda)">
        <title>Aspergillus fumigatus MADS-Box transcription factor rlmA is required for regulation of the cell wall integrity and virulence.</title>
        <authorList>
            <person name="Rocha M.C."/>
            <person name="Fabri J.H."/>
            <person name="Franco de Godoy K."/>
            <person name="Alves de Castro P."/>
            <person name="Hori J.I."/>
            <person name="Ferreira da Cunha A."/>
            <person name="Arentshorst M."/>
            <person name="Ram A.F."/>
            <person name="van den Hondel C.A."/>
            <person name="Goldman G.H."/>
            <person name="Malavazi I."/>
        </authorList>
    </citation>
    <scope>FUNCTION</scope>
    <scope>DISRUPTION PHENOTYPE</scope>
    <scope>INDUCTION</scope>
</reference>
<reference key="5">
    <citation type="journal article" date="2016" name="Mol. Microbiol.">
        <title>The Aspergillus fumigatus conidial melanin production is regulated by the bifunctional bHLH DevR and MADS-box RlmA transcription factors.</title>
        <authorList>
            <person name="Valiante V."/>
            <person name="Baldin C."/>
            <person name="Hortschansky P."/>
            <person name="Jain R."/>
            <person name="Thywissen A."/>
            <person name="Strassburger M."/>
            <person name="Shelest E."/>
            <person name="Heinekamp T."/>
            <person name="Brakhage A.A."/>
        </authorList>
    </citation>
    <scope>FUNCTION</scope>
    <scope>DISRUPTION PHENOTYPE</scope>
</reference>
<reference key="6">
    <citation type="journal article" date="2020" name="Appl. Environ. Microbiol.">
        <title>The cell wall integrity pathway contributes to the early stages of Aspergillus fumigatus asexual development.</title>
        <authorList>
            <person name="Rocha M.C."/>
            <person name="Fabri J.H.T.M."/>
            <person name="Simoes I.T."/>
            <person name="Silva-Rocha R."/>
            <person name="Hagiwara D."/>
            <person name="da Cunha A.F."/>
            <person name="Goldman G.H."/>
            <person name="Canovas D."/>
            <person name="Malavazi I."/>
        </authorList>
    </citation>
    <scope>FUNCTION</scope>
    <scope>INDUCTION</scope>
    <scope>DISRUPTION PHENOTYPE</scope>
    <scope>PHOSPHORYLATION</scope>
</reference>
<reference key="7">
    <citation type="journal article" date="2021" name="Cell. Microbiol.">
        <title>Aspergillus fumigatus Hsp90 interacts with the main components of the cell wall integrity pathway and cooperates in heat shock and cell wall stress adaptation.</title>
        <authorList>
            <person name="Rocha M.C."/>
            <person name="Minari K."/>
            <person name="Fabri J.H.T.M."/>
            <person name="Kerkaert J.D."/>
            <person name="Gava L.M."/>
            <person name="da Cunha A.F."/>
            <person name="Cramer R.A."/>
            <person name="Borges J.C."/>
            <person name="Malavazi I."/>
        </authorList>
    </citation>
    <scope>FUNCTION</scope>
    <scope>INTERACTION WITH HSP90</scope>
</reference>
<reference key="8">
    <citation type="journal article" date="2021" name="Genetics">
        <title>Transcriptional control of the production of Aspergillus fumigatus conidia-borne secondary metabolite fumiquinazoline C important for phagocytosis protection.</title>
        <authorList>
            <person name="Rocha M.C."/>
            <person name="Fabri J.H.T.M."/>
            <person name="da Silva L.P."/>
            <person name="Angolini C.F.F."/>
            <person name="Bertolini M.C."/>
            <person name="da Cunha A.F."/>
            <person name="Valiante V."/>
            <person name="Goldman G.H."/>
            <person name="Fill T.P."/>
            <person name="Malavazi I."/>
        </authorList>
    </citation>
    <scope>FUNCTION</scope>
    <scope>DISRUPTION PHENOTYPE</scope>
    <scope>DNA-BINDING</scope>
</reference>
<sequence>MGRRKIEIKAIKDDRNRSVTFLKRKGGLFKKAHELAVLCSVDVAVIIFGHNKKLYEFSSCDMRETLGRYQYYGPPHEHKGPEDFNGKRDDDDDEDETTPAPEEMQPTTQNPPAVVPAHIPSHPGFQHVNHAPSASPPISNGIPFDPRHGTPQPQGASRPSSRNHLRRVSSNLGPQQHHGTPPPPPQNGFAYIPNPSMYHPNANPNIAQQPRPPQFAHYGPQQPLPPHAIPPHPMPQPVPPHHQAPQHLPQHPHPLAQQTPAMGLSQPPHASIPQVAQPFLPEQGRNSIPPAFPTEQSQPPRPVSLPDVSSADQMVGPLKVETSPSPPHQRSLSSKSRSIFTPIDDRGSVLARHFGLGPPTCESPRTESADVKAEAKQNDSKEIKPPAQPVAPPPPPRTTADAARSQSAPDIKPPPRTNSGQLPSKRPQLKVQIPSENSDRGSATADSSSSTGNQTVTPAKANPDTNHSGVVLPPPSPSAGAILSAGATGPPNPFARPPPPGTASQNSNAYNSNNNIETPISALPSRFVSDALLPSPSSFFPEWGFGRSGPDTNMLPSPLTFPTPAVQTGPGFAREDEQEKKRKSPDSGPSIEGTAKKSKT</sequence>
<accession>Q4WX78</accession>
<name>RLMA_ASPFU</name>
<gene>
    <name evidence="11" type="primary">rlmA</name>
    <name type="ORF">AFUA_3G08520</name>
</gene>
<keyword id="KW-0238">DNA-binding</keyword>
<keyword id="KW-0539">Nucleus</keyword>
<keyword id="KW-0597">Phosphoprotein</keyword>
<keyword id="KW-1185">Reference proteome</keyword>
<keyword id="KW-0804">Transcription</keyword>
<keyword id="KW-0805">Transcription regulation</keyword>
<keyword id="KW-0843">Virulence</keyword>
<protein>
    <recommendedName>
        <fullName evidence="11">Transcription factor rlmA</fullName>
    </recommendedName>
</protein>
<dbReference type="EMBL" id="AAHF01000002">
    <property type="protein sequence ID" value="EAL92725.1"/>
    <property type="molecule type" value="Genomic_DNA"/>
</dbReference>
<dbReference type="RefSeq" id="XP_754763.1">
    <property type="nucleotide sequence ID" value="XM_749670.1"/>
</dbReference>
<dbReference type="SMR" id="Q4WX78"/>
<dbReference type="STRING" id="330879.Q4WX78"/>
<dbReference type="EnsemblFungi" id="EAL92725">
    <property type="protein sequence ID" value="EAL92725"/>
    <property type="gene ID" value="AFUA_3G08520"/>
</dbReference>
<dbReference type="GeneID" id="3512174"/>
<dbReference type="KEGG" id="afm:AFUA_3G08520"/>
<dbReference type="VEuPathDB" id="FungiDB:Afu3g08520"/>
<dbReference type="eggNOG" id="KOG0014">
    <property type="taxonomic scope" value="Eukaryota"/>
</dbReference>
<dbReference type="HOGENOM" id="CLU_024080_1_0_1"/>
<dbReference type="InParanoid" id="Q4WX78"/>
<dbReference type="OMA" id="LGRYQYF"/>
<dbReference type="OrthoDB" id="1898716at2759"/>
<dbReference type="PHI-base" id="PHI:11369"/>
<dbReference type="PHI-base" id="PHI:6647"/>
<dbReference type="Proteomes" id="UP000002530">
    <property type="component" value="Chromosome 3"/>
</dbReference>
<dbReference type="GO" id="GO:0005634">
    <property type="term" value="C:nucleus"/>
    <property type="evidence" value="ECO:0007669"/>
    <property type="project" value="UniProtKB-SubCell"/>
</dbReference>
<dbReference type="GO" id="GO:0000981">
    <property type="term" value="F:DNA-binding transcription factor activity, RNA polymerase II-specific"/>
    <property type="evidence" value="ECO:0000318"/>
    <property type="project" value="GO_Central"/>
</dbReference>
<dbReference type="GO" id="GO:0046983">
    <property type="term" value="F:protein dimerization activity"/>
    <property type="evidence" value="ECO:0007669"/>
    <property type="project" value="InterPro"/>
</dbReference>
<dbReference type="GO" id="GO:0000978">
    <property type="term" value="F:RNA polymerase II cis-regulatory region sequence-specific DNA binding"/>
    <property type="evidence" value="ECO:0000318"/>
    <property type="project" value="GO_Central"/>
</dbReference>
<dbReference type="GO" id="GO:0045944">
    <property type="term" value="P:positive regulation of transcription by RNA polymerase II"/>
    <property type="evidence" value="ECO:0000318"/>
    <property type="project" value="GO_Central"/>
</dbReference>
<dbReference type="CDD" id="cd00265">
    <property type="entry name" value="MADS_MEF2_like"/>
    <property type="match status" value="1"/>
</dbReference>
<dbReference type="FunFam" id="3.40.1810.10:FF:000013">
    <property type="entry name" value="Transcription factor, MADS-box"/>
    <property type="match status" value="1"/>
</dbReference>
<dbReference type="Gene3D" id="3.40.1810.10">
    <property type="entry name" value="Transcription factor, MADS-box"/>
    <property type="match status" value="1"/>
</dbReference>
<dbReference type="InterPro" id="IPR050142">
    <property type="entry name" value="MADS-box/MEF2_TF"/>
</dbReference>
<dbReference type="InterPro" id="IPR033896">
    <property type="entry name" value="MEF2-like_N"/>
</dbReference>
<dbReference type="InterPro" id="IPR002100">
    <property type="entry name" value="TF_MADSbox"/>
</dbReference>
<dbReference type="InterPro" id="IPR036879">
    <property type="entry name" value="TF_MADSbox_sf"/>
</dbReference>
<dbReference type="PANTHER" id="PTHR48019">
    <property type="entry name" value="SERUM RESPONSE FACTOR HOMOLOG"/>
    <property type="match status" value="1"/>
</dbReference>
<dbReference type="Pfam" id="PF00319">
    <property type="entry name" value="SRF-TF"/>
    <property type="match status" value="1"/>
</dbReference>
<dbReference type="PRINTS" id="PR00404">
    <property type="entry name" value="MADSDOMAIN"/>
</dbReference>
<dbReference type="SMART" id="SM00432">
    <property type="entry name" value="MADS"/>
    <property type="match status" value="1"/>
</dbReference>
<dbReference type="SUPFAM" id="SSF55455">
    <property type="entry name" value="SRF-like"/>
    <property type="match status" value="1"/>
</dbReference>
<dbReference type="PROSITE" id="PS00350">
    <property type="entry name" value="MADS_BOX_1"/>
    <property type="match status" value="1"/>
</dbReference>
<dbReference type="PROSITE" id="PS50066">
    <property type="entry name" value="MADS_BOX_2"/>
    <property type="match status" value="1"/>
</dbReference>